<reference key="1">
    <citation type="journal article" date="1989" name="J. Bacteriol.">
        <title>Nucleotide sequence of traQ and adjacent loci in the Escherichia coli K-12 F-plasmid transfer operon.</title>
        <authorList>
            <person name="Wu J.H."/>
            <person name="Ippen-Ihler K."/>
        </authorList>
    </citation>
    <scope>NUCLEOTIDE SEQUENCE [GENOMIC DNA]</scope>
    <source>
        <strain>K12</strain>
    </source>
</reference>
<reference key="2">
    <citation type="journal article" date="1994" name="Microbiol. Rev.">
        <title>Analysis of the sequence and gene products of the transfer region of the F sex factor.</title>
        <authorList>
            <person name="Frost L.S."/>
            <person name="Ippen-Ihler K."/>
            <person name="Skurray R.A."/>
        </authorList>
    </citation>
    <scope>NUCLEOTIDE SEQUENCE [GENOMIC DNA]</scope>
</reference>
<reference key="3">
    <citation type="submission" date="2000-04" db="EMBL/GenBank/DDBJ databases">
        <title>Complete nucleotide sequence of the F plasmid: its implications for organization and diversification of plasmid genomes.</title>
        <authorList>
            <person name="Shimizu H."/>
            <person name="Saitoh Y."/>
            <person name="Suda Y."/>
            <person name="Uehara K."/>
            <person name="Sampei G."/>
            <person name="Mizobuchi K."/>
        </authorList>
    </citation>
    <scope>NUCLEOTIDE SEQUENCE [LARGE SCALE GENOMIC DNA]</scope>
    <source>
        <strain>K12 / CR63</strain>
    </source>
</reference>
<accession>P18035</accession>
<gene>
    <name type="primary">trbB</name>
    <name type="ordered locus">ECOK12F095</name>
</gene>
<feature type="signal peptide" evidence="1">
    <location>
        <begin position="1"/>
        <end position="22"/>
    </location>
</feature>
<feature type="chain" id="PRO_0000024511" description="Protein TrbB">
    <location>
        <begin position="23"/>
        <end position="181"/>
    </location>
</feature>
<feature type="domain" description="Thioredoxin" evidence="2">
    <location>
        <begin position="37"/>
        <end position="172"/>
    </location>
</feature>
<feature type="sequence conflict" description="In Ref. 1 and 2." evidence="3" ref="1 2">
    <location>
        <begin position="145"/>
        <end position="146"/>
    </location>
</feature>
<keyword id="KW-0184">Conjugation</keyword>
<keyword id="KW-0574">Periplasm</keyword>
<keyword id="KW-0614">Plasmid</keyword>
<keyword id="KW-0732">Signal</keyword>
<name>TRBB_ECOLI</name>
<protein>
    <recommendedName>
        <fullName>Protein TrbB</fullName>
    </recommendedName>
</protein>
<proteinExistence type="inferred from homology"/>
<dbReference type="EMBL" id="U01159">
    <property type="protein sequence ID" value="AAC44204.1"/>
    <property type="molecule type" value="Genomic_DNA"/>
</dbReference>
<dbReference type="EMBL" id="M20787">
    <property type="protein sequence ID" value="AAC63067.1"/>
    <property type="molecule type" value="Genomic_DNA"/>
</dbReference>
<dbReference type="EMBL" id="AP001918">
    <property type="protein sequence ID" value="BAA97965.1"/>
    <property type="molecule type" value="Genomic_DNA"/>
</dbReference>
<dbReference type="PIR" id="E32238">
    <property type="entry name" value="BVECTB"/>
</dbReference>
<dbReference type="RefSeq" id="NP_061474.1">
    <property type="nucleotide sequence ID" value="NC_002483.1"/>
</dbReference>
<dbReference type="RefSeq" id="WP_000059850.1">
    <property type="nucleotide sequence ID" value="NZ_JACEFS010000047.1"/>
</dbReference>
<dbReference type="SASBDB" id="P18035"/>
<dbReference type="SMR" id="P18035"/>
<dbReference type="DIP" id="DIP-28104N"/>
<dbReference type="KEGG" id="ecoc:C3026_24575"/>
<dbReference type="PATRIC" id="fig|83333.107.peg.617"/>
<dbReference type="OrthoDB" id="5559625at2"/>
<dbReference type="GO" id="GO:0042597">
    <property type="term" value="C:periplasmic space"/>
    <property type="evidence" value="ECO:0007669"/>
    <property type="project" value="UniProtKB-SubCell"/>
</dbReference>
<dbReference type="Gene3D" id="3.40.30.10">
    <property type="entry name" value="Glutaredoxin"/>
    <property type="match status" value="1"/>
</dbReference>
<dbReference type="InterPro" id="IPR014109">
    <property type="entry name" value="Thiol-disulphide_isomerase_rbB"/>
</dbReference>
<dbReference type="InterPro" id="IPR036249">
    <property type="entry name" value="Thioredoxin-like_sf"/>
</dbReference>
<dbReference type="InterPro" id="IPR013766">
    <property type="entry name" value="Thioredoxin_domain"/>
</dbReference>
<dbReference type="InterPro" id="IPR039555">
    <property type="entry name" value="TraF/TrbB"/>
</dbReference>
<dbReference type="NCBIfam" id="NF010288">
    <property type="entry name" value="PRK13728.1"/>
    <property type="match status" value="1"/>
</dbReference>
<dbReference type="NCBIfam" id="TIGR02738">
    <property type="entry name" value="TrbB"/>
    <property type="match status" value="1"/>
</dbReference>
<dbReference type="Pfam" id="PF13728">
    <property type="entry name" value="TraF"/>
    <property type="match status" value="1"/>
</dbReference>
<dbReference type="SUPFAM" id="SSF52833">
    <property type="entry name" value="Thioredoxin-like"/>
    <property type="match status" value="1"/>
</dbReference>
<dbReference type="PROSITE" id="PS51352">
    <property type="entry name" value="THIOREDOXIN_2"/>
    <property type="match status" value="1"/>
</dbReference>
<geneLocation type="plasmid">
    <name>F</name>
</geneLocation>
<evidence type="ECO:0000255" key="1"/>
<evidence type="ECO:0000255" key="2">
    <source>
        <dbReference type="PROSITE-ProRule" id="PRU00691"/>
    </source>
</evidence>
<evidence type="ECO:0000305" key="3"/>
<comment type="subcellular location">
    <subcellularLocation>
        <location>Periplasm</location>
    </subcellularLocation>
</comment>
<organism>
    <name type="scientific">Escherichia coli (strain K12)</name>
    <dbReference type="NCBI Taxonomy" id="83333"/>
    <lineage>
        <taxon>Bacteria</taxon>
        <taxon>Pseudomonadati</taxon>
        <taxon>Pseudomonadota</taxon>
        <taxon>Gammaproteobacteria</taxon>
        <taxon>Enterobacterales</taxon>
        <taxon>Enterobacteriaceae</taxon>
        <taxon>Escherichia</taxon>
    </lineage>
</organism>
<sequence length="181" mass="19719">MSLTKSLLFTLLLSAAAVQASTRDEIERLWNPQGMATQPAQPAAGTSARTAKPAPRWFRLSNGRQVNLADWKVVLFMQGHCPYCHQFDPVLKQLAQQYGFSVFSYTLDGQGDTAFPEALPVPPDVMQTFFPNIPVATPTTFLVNVNTLEALPLLQGATDAAGFMARVDTVLQMYGGKKGAK</sequence>